<protein>
    <recommendedName>
        <fullName evidence="1">Hydroxyacylglutathione hydrolase</fullName>
        <ecNumber evidence="1">3.1.2.6</ecNumber>
    </recommendedName>
    <alternativeName>
        <fullName evidence="1">Glyoxalase II</fullName>
        <shortName evidence="1">Glx II</shortName>
    </alternativeName>
</protein>
<sequence length="250" mass="27984">MELISIPALSDNYIWLLCDENRHVVIVDPAESQPVLDTLESRGWIPDAILLTHHHHDHVGGVPGIIDRFPELLVYGPAETQSKGATIIVCGGDSINFGHFSFQIIDVPGHTLGHIAFYQAPYLFCGDTLFSGGCGRLFEGTAEQMYTSIGKIAELPDDTLICCAHEYTISNMKFAHAVLPNQTISEYQQKVIRMRENNQPTIPTTLQTEKKINIFLKCDDIDLQRNIGITPNSQPLSAVFHQLRRQKDQF</sequence>
<dbReference type="EC" id="3.1.2.6" evidence="1"/>
<dbReference type="EMBL" id="BX571862">
    <property type="protein sequence ID" value="CAE13235.1"/>
    <property type="molecule type" value="Genomic_DNA"/>
</dbReference>
<dbReference type="RefSeq" id="WP_011145305.1">
    <property type="nucleotide sequence ID" value="NC_005126.1"/>
</dbReference>
<dbReference type="SMR" id="Q7N809"/>
<dbReference type="STRING" id="243265.plu0940"/>
<dbReference type="GeneID" id="48847229"/>
<dbReference type="KEGG" id="plu:plu0940"/>
<dbReference type="eggNOG" id="COG0491">
    <property type="taxonomic scope" value="Bacteria"/>
</dbReference>
<dbReference type="HOGENOM" id="CLU_030571_4_1_6"/>
<dbReference type="OrthoDB" id="9802248at2"/>
<dbReference type="UniPathway" id="UPA00619">
    <property type="reaction ID" value="UER00676"/>
</dbReference>
<dbReference type="Proteomes" id="UP000002514">
    <property type="component" value="Chromosome"/>
</dbReference>
<dbReference type="GO" id="GO:0004416">
    <property type="term" value="F:hydroxyacylglutathione hydrolase activity"/>
    <property type="evidence" value="ECO:0007669"/>
    <property type="project" value="UniProtKB-UniRule"/>
</dbReference>
<dbReference type="GO" id="GO:0046872">
    <property type="term" value="F:metal ion binding"/>
    <property type="evidence" value="ECO:0007669"/>
    <property type="project" value="UniProtKB-KW"/>
</dbReference>
<dbReference type="GO" id="GO:0019243">
    <property type="term" value="P:methylglyoxal catabolic process to D-lactate via S-lactoyl-glutathione"/>
    <property type="evidence" value="ECO:0007669"/>
    <property type="project" value="InterPro"/>
</dbReference>
<dbReference type="CDD" id="cd07723">
    <property type="entry name" value="hydroxyacylglutathione_hydrolase_MBL-fold"/>
    <property type="match status" value="1"/>
</dbReference>
<dbReference type="Gene3D" id="3.60.15.10">
    <property type="entry name" value="Ribonuclease Z/Hydroxyacylglutathione hydrolase-like"/>
    <property type="match status" value="1"/>
</dbReference>
<dbReference type="HAMAP" id="MF_01374">
    <property type="entry name" value="Glyoxalase_2"/>
    <property type="match status" value="1"/>
</dbReference>
<dbReference type="InterPro" id="IPR035680">
    <property type="entry name" value="Clx_II_MBL"/>
</dbReference>
<dbReference type="InterPro" id="IPR050110">
    <property type="entry name" value="Glyoxalase_II_hydrolase"/>
</dbReference>
<dbReference type="InterPro" id="IPR032282">
    <property type="entry name" value="HAGH_C"/>
</dbReference>
<dbReference type="InterPro" id="IPR017782">
    <property type="entry name" value="Hydroxyacylglutathione_Hdrlase"/>
</dbReference>
<dbReference type="InterPro" id="IPR001279">
    <property type="entry name" value="Metallo-B-lactamas"/>
</dbReference>
<dbReference type="InterPro" id="IPR036866">
    <property type="entry name" value="RibonucZ/Hydroxyglut_hydro"/>
</dbReference>
<dbReference type="NCBIfam" id="TIGR03413">
    <property type="entry name" value="GSH_gloB"/>
    <property type="match status" value="1"/>
</dbReference>
<dbReference type="PANTHER" id="PTHR43705">
    <property type="entry name" value="HYDROXYACYLGLUTATHIONE HYDROLASE"/>
    <property type="match status" value="1"/>
</dbReference>
<dbReference type="PANTHER" id="PTHR43705:SF1">
    <property type="entry name" value="HYDROXYACYLGLUTATHIONE HYDROLASE GLOB"/>
    <property type="match status" value="1"/>
</dbReference>
<dbReference type="Pfam" id="PF16123">
    <property type="entry name" value="HAGH_C"/>
    <property type="match status" value="1"/>
</dbReference>
<dbReference type="Pfam" id="PF00753">
    <property type="entry name" value="Lactamase_B"/>
    <property type="match status" value="1"/>
</dbReference>
<dbReference type="PIRSF" id="PIRSF005457">
    <property type="entry name" value="Glx"/>
    <property type="match status" value="1"/>
</dbReference>
<dbReference type="SMART" id="SM00849">
    <property type="entry name" value="Lactamase_B"/>
    <property type="match status" value="1"/>
</dbReference>
<dbReference type="SUPFAM" id="SSF56281">
    <property type="entry name" value="Metallo-hydrolase/oxidoreductase"/>
    <property type="match status" value="1"/>
</dbReference>
<organism>
    <name type="scientific">Photorhabdus laumondii subsp. laumondii (strain DSM 15139 / CIP 105565 / TT01)</name>
    <name type="common">Photorhabdus luminescens subsp. laumondii</name>
    <dbReference type="NCBI Taxonomy" id="243265"/>
    <lineage>
        <taxon>Bacteria</taxon>
        <taxon>Pseudomonadati</taxon>
        <taxon>Pseudomonadota</taxon>
        <taxon>Gammaproteobacteria</taxon>
        <taxon>Enterobacterales</taxon>
        <taxon>Morganellaceae</taxon>
        <taxon>Photorhabdus</taxon>
    </lineage>
</organism>
<feature type="chain" id="PRO_0000309673" description="Hydroxyacylglutathione hydrolase">
    <location>
        <begin position="1"/>
        <end position="250"/>
    </location>
</feature>
<feature type="binding site" evidence="1">
    <location>
        <position position="53"/>
    </location>
    <ligand>
        <name>Zn(2+)</name>
        <dbReference type="ChEBI" id="CHEBI:29105"/>
        <label>1</label>
    </ligand>
</feature>
<feature type="binding site" evidence="1">
    <location>
        <position position="55"/>
    </location>
    <ligand>
        <name>Zn(2+)</name>
        <dbReference type="ChEBI" id="CHEBI:29105"/>
        <label>1</label>
    </ligand>
</feature>
<feature type="binding site" evidence="1">
    <location>
        <position position="57"/>
    </location>
    <ligand>
        <name>Zn(2+)</name>
        <dbReference type="ChEBI" id="CHEBI:29105"/>
        <label>2</label>
    </ligand>
</feature>
<feature type="binding site" evidence="1">
    <location>
        <position position="58"/>
    </location>
    <ligand>
        <name>Zn(2+)</name>
        <dbReference type="ChEBI" id="CHEBI:29105"/>
        <label>2</label>
    </ligand>
</feature>
<feature type="binding site" evidence="1">
    <location>
        <position position="110"/>
    </location>
    <ligand>
        <name>Zn(2+)</name>
        <dbReference type="ChEBI" id="CHEBI:29105"/>
        <label>1</label>
    </ligand>
</feature>
<feature type="binding site" evidence="1">
    <location>
        <position position="127"/>
    </location>
    <ligand>
        <name>Zn(2+)</name>
        <dbReference type="ChEBI" id="CHEBI:29105"/>
        <label>1</label>
    </ligand>
</feature>
<feature type="binding site" evidence="1">
    <location>
        <position position="127"/>
    </location>
    <ligand>
        <name>Zn(2+)</name>
        <dbReference type="ChEBI" id="CHEBI:29105"/>
        <label>2</label>
    </ligand>
</feature>
<feature type="binding site" evidence="1">
    <location>
        <position position="165"/>
    </location>
    <ligand>
        <name>Zn(2+)</name>
        <dbReference type="ChEBI" id="CHEBI:29105"/>
        <label>2</label>
    </ligand>
</feature>
<gene>
    <name evidence="1" type="primary">gloB</name>
    <name type="ordered locus">plu0940</name>
</gene>
<evidence type="ECO:0000255" key="1">
    <source>
        <dbReference type="HAMAP-Rule" id="MF_01374"/>
    </source>
</evidence>
<keyword id="KW-0378">Hydrolase</keyword>
<keyword id="KW-0479">Metal-binding</keyword>
<keyword id="KW-1185">Reference proteome</keyword>
<keyword id="KW-0862">Zinc</keyword>
<proteinExistence type="inferred from homology"/>
<reference key="1">
    <citation type="journal article" date="2003" name="Nat. Biotechnol.">
        <title>The genome sequence of the entomopathogenic bacterium Photorhabdus luminescens.</title>
        <authorList>
            <person name="Duchaud E."/>
            <person name="Rusniok C."/>
            <person name="Frangeul L."/>
            <person name="Buchrieser C."/>
            <person name="Givaudan A."/>
            <person name="Taourit S."/>
            <person name="Bocs S."/>
            <person name="Boursaux-Eude C."/>
            <person name="Chandler M."/>
            <person name="Charles J.-F."/>
            <person name="Dassa E."/>
            <person name="Derose R."/>
            <person name="Derzelle S."/>
            <person name="Freyssinet G."/>
            <person name="Gaudriault S."/>
            <person name="Medigue C."/>
            <person name="Lanois A."/>
            <person name="Powell K."/>
            <person name="Siguier P."/>
            <person name="Vincent R."/>
            <person name="Wingate V."/>
            <person name="Zouine M."/>
            <person name="Glaser P."/>
            <person name="Boemare N."/>
            <person name="Danchin A."/>
            <person name="Kunst F."/>
        </authorList>
    </citation>
    <scope>NUCLEOTIDE SEQUENCE [LARGE SCALE GENOMIC DNA]</scope>
    <source>
        <strain>DSM 15139 / CIP 105565 / TT01</strain>
    </source>
</reference>
<name>GLO2_PHOLL</name>
<accession>Q7N809</accession>
<comment type="function">
    <text evidence="1">Thiolesterase that catalyzes the hydrolysis of S-D-lactoyl-glutathione to form glutathione and D-lactic acid.</text>
</comment>
<comment type="catalytic activity">
    <reaction evidence="1">
        <text>an S-(2-hydroxyacyl)glutathione + H2O = a 2-hydroxy carboxylate + glutathione + H(+)</text>
        <dbReference type="Rhea" id="RHEA:21864"/>
        <dbReference type="ChEBI" id="CHEBI:15377"/>
        <dbReference type="ChEBI" id="CHEBI:15378"/>
        <dbReference type="ChEBI" id="CHEBI:57925"/>
        <dbReference type="ChEBI" id="CHEBI:58896"/>
        <dbReference type="ChEBI" id="CHEBI:71261"/>
        <dbReference type="EC" id="3.1.2.6"/>
    </reaction>
</comment>
<comment type="cofactor">
    <cofactor evidence="1">
        <name>Zn(2+)</name>
        <dbReference type="ChEBI" id="CHEBI:29105"/>
    </cofactor>
    <text evidence="1">Binds 2 Zn(2+) ions per subunit.</text>
</comment>
<comment type="pathway">
    <text evidence="1">Secondary metabolite metabolism; methylglyoxal degradation; (R)-lactate from methylglyoxal: step 2/2.</text>
</comment>
<comment type="subunit">
    <text evidence="1">Monomer.</text>
</comment>
<comment type="similarity">
    <text evidence="1">Belongs to the metallo-beta-lactamase superfamily. Glyoxalase II family.</text>
</comment>